<accession>Q9Y4C0</accession>
<accession>A6NGR4</accession>
<accession>A7MD34</accession>
<accession>O95378</accession>
<accession>Q8IUE3</accession>
<accession>Q9NS47</accession>
<accession>Q9P1V3</accession>
<accession>Q9P1V6</accession>
<accession>Q9UIE2</accession>
<accession>Q9UIE3</accession>
<accession>Q9ULA5</accession>
<accession>Q9Y486</accession>
<evidence type="ECO:0000250" key="1"/>
<evidence type="ECO:0000250" key="2">
    <source>
        <dbReference type="UniProtKB" id="Q07310"/>
    </source>
</evidence>
<evidence type="ECO:0000250" key="3">
    <source>
        <dbReference type="UniProtKB" id="Q28146"/>
    </source>
</evidence>
<evidence type="ECO:0000250" key="4">
    <source>
        <dbReference type="UniProtKB" id="Q63376"/>
    </source>
</evidence>
<evidence type="ECO:0000250" key="5">
    <source>
        <dbReference type="UniProtKB" id="Q6P9K9"/>
    </source>
</evidence>
<evidence type="ECO:0000250" key="6">
    <source>
        <dbReference type="UniProtKB" id="Q8C985"/>
    </source>
</evidence>
<evidence type="ECO:0000250" key="7">
    <source>
        <dbReference type="UniProtKB" id="Q9CS84"/>
    </source>
</evidence>
<evidence type="ECO:0000255" key="8"/>
<evidence type="ECO:0000255" key="9">
    <source>
        <dbReference type="PROSITE-ProRule" id="PRU00076"/>
    </source>
</evidence>
<evidence type="ECO:0000255" key="10">
    <source>
        <dbReference type="PROSITE-ProRule" id="PRU00122"/>
    </source>
</evidence>
<evidence type="ECO:0000256" key="11">
    <source>
        <dbReference type="SAM" id="MobiDB-lite"/>
    </source>
</evidence>
<evidence type="ECO:0000269" key="12">
    <source>
    </source>
</evidence>
<evidence type="ECO:0000269" key="13">
    <source>
    </source>
</evidence>
<evidence type="ECO:0000269" key="14">
    <source>
    </source>
</evidence>
<evidence type="ECO:0000303" key="15">
    <source>
    </source>
</evidence>
<evidence type="ECO:0000303" key="16">
    <source>
    </source>
</evidence>
<evidence type="ECO:0000303" key="17">
    <source>
    </source>
</evidence>
<evidence type="ECO:0000305" key="18"/>
<feature type="signal peptide" evidence="1">
    <location>
        <begin position="1"/>
        <end position="27"/>
    </location>
</feature>
<feature type="chain" id="PRO_0000019499" description="Neurexin-3">
    <location>
        <begin position="28"/>
        <end position="1643"/>
    </location>
</feature>
<feature type="topological domain" description="Extracellular" evidence="8">
    <location>
        <begin position="28"/>
        <end position="1568"/>
    </location>
</feature>
<feature type="transmembrane region" description="Helical" evidence="8">
    <location>
        <begin position="1569"/>
        <end position="1589"/>
    </location>
</feature>
<feature type="topological domain" description="Cytoplasmic" evidence="8">
    <location>
        <begin position="1590"/>
        <end position="1643"/>
    </location>
</feature>
<feature type="domain" description="Laminin G-like 1" evidence="10">
    <location>
        <begin position="28"/>
        <end position="202"/>
    </location>
</feature>
<feature type="domain" description="EGF-like 1" evidence="9">
    <location>
        <begin position="198"/>
        <end position="235"/>
    </location>
</feature>
<feature type="domain" description="Laminin G-like 2" evidence="10">
    <location>
        <begin position="258"/>
        <end position="440"/>
    </location>
</feature>
<feature type="domain" description="Laminin G-like 3" evidence="10">
    <location>
        <begin position="447"/>
        <end position="639"/>
    </location>
</feature>
<feature type="domain" description="EGF-like 2" evidence="9">
    <location>
        <begin position="643"/>
        <end position="680"/>
    </location>
</feature>
<feature type="domain" description="Laminin G-like 4" evidence="10">
    <location>
        <begin position="685"/>
        <end position="857"/>
    </location>
</feature>
<feature type="domain" description="Laminin G-like 5" evidence="10">
    <location>
        <begin position="871"/>
        <end position="1046"/>
    </location>
</feature>
<feature type="domain" description="EGF-like 3" evidence="9">
    <location>
        <begin position="1049"/>
        <end position="1086"/>
    </location>
</feature>
<feature type="domain" description="Laminin G-like 6" evidence="10">
    <location>
        <begin position="1090"/>
        <end position="1260"/>
    </location>
</feature>
<feature type="region of interest" description="Disordered" evidence="11">
    <location>
        <begin position="1294"/>
        <end position="1318"/>
    </location>
</feature>
<feature type="region of interest" description="Disordered" evidence="11">
    <location>
        <begin position="1611"/>
        <end position="1643"/>
    </location>
</feature>
<feature type="compositionally biased region" description="Polar residues" evidence="11">
    <location>
        <begin position="1303"/>
        <end position="1318"/>
    </location>
</feature>
<feature type="binding site" evidence="3">
    <location>
        <position position="304"/>
    </location>
    <ligand>
        <name>Ca(2+)</name>
        <dbReference type="ChEBI" id="CHEBI:29108"/>
        <label>1</label>
    </ligand>
</feature>
<feature type="binding site" evidence="3">
    <location>
        <position position="321"/>
    </location>
    <ligand>
        <name>Ca(2+)</name>
        <dbReference type="ChEBI" id="CHEBI:29108"/>
        <label>1</label>
    </ligand>
</feature>
<feature type="binding site" evidence="3">
    <location>
        <position position="374"/>
    </location>
    <ligand>
        <name>Ca(2+)</name>
        <dbReference type="ChEBI" id="CHEBI:29108"/>
        <label>1</label>
    </ligand>
</feature>
<feature type="binding site" evidence="3">
    <location>
        <position position="732"/>
    </location>
    <ligand>
        <name>Ca(2+)</name>
        <dbReference type="ChEBI" id="CHEBI:29108"/>
        <label>2</label>
    </ligand>
</feature>
<feature type="binding site" evidence="3">
    <location>
        <position position="749"/>
    </location>
    <ligand>
        <name>Ca(2+)</name>
        <dbReference type="ChEBI" id="CHEBI:29108"/>
        <label>2</label>
    </ligand>
</feature>
<feature type="binding site" evidence="3">
    <location>
        <position position="807"/>
    </location>
    <ligand>
        <name>Ca(2+)</name>
        <dbReference type="ChEBI" id="CHEBI:29108"/>
        <label>2</label>
    </ligand>
</feature>
<feature type="binding site" evidence="7">
    <location>
        <position position="1142"/>
    </location>
    <ligand>
        <name>Ca(2+)</name>
        <dbReference type="ChEBI" id="CHEBI:29108"/>
        <label>3</label>
    </ligand>
</feature>
<feature type="binding site" evidence="7">
    <location>
        <position position="1159"/>
    </location>
    <ligand>
        <name>Ca(2+)</name>
        <dbReference type="ChEBI" id="CHEBI:29108"/>
        <label>3</label>
    </ligand>
</feature>
<feature type="binding site" evidence="7">
    <location>
        <position position="1211"/>
    </location>
    <ligand>
        <name>Ca(2+)</name>
        <dbReference type="ChEBI" id="CHEBI:29108"/>
        <label>3</label>
    </ligand>
</feature>
<feature type="binding site" evidence="7">
    <location>
        <position position="1213"/>
    </location>
    <ligand>
        <name>Ca(2+)</name>
        <dbReference type="ChEBI" id="CHEBI:29108"/>
        <label>3</label>
    </ligand>
</feature>
<feature type="glycosylation site" description="N-linked (GlcNAc...) asparagine" evidence="8">
    <location>
        <position position="58"/>
    </location>
</feature>
<feature type="glycosylation site" description="N-linked (GlcNAc...) asparagine" evidence="8">
    <location>
        <position position="105"/>
    </location>
</feature>
<feature type="glycosylation site" description="N-linked (GlcNAc...) asparagine" evidence="8">
    <location>
        <position position="757"/>
    </location>
</feature>
<feature type="glycosylation site" description="N-linked (GlcNAc...) asparagine" evidence="8">
    <location>
        <position position="1189"/>
    </location>
</feature>
<feature type="glycosylation site" description="N-linked (GlcNAc...) asparagine" evidence="8">
    <location>
        <position position="1257"/>
    </location>
</feature>
<feature type="glycosylation site" description="N-linked (GlcNAc...) asparagine" evidence="8">
    <location>
        <position position="1301"/>
    </location>
</feature>
<feature type="glycosylation site" description="O-linked (Xyl...) (heparan sulfate) serine" evidence="6">
    <location>
        <position position="1317"/>
    </location>
</feature>
<feature type="disulfide bond" evidence="9">
    <location>
        <begin position="202"/>
        <end position="213"/>
    </location>
</feature>
<feature type="disulfide bond" evidence="9">
    <location>
        <begin position="207"/>
        <end position="222"/>
    </location>
</feature>
<feature type="disulfide bond" evidence="9">
    <location>
        <begin position="224"/>
        <end position="234"/>
    </location>
</feature>
<feature type="disulfide bond" evidence="10">
    <location>
        <begin position="404"/>
        <end position="440"/>
    </location>
</feature>
<feature type="disulfide bond" evidence="10">
    <location>
        <begin position="610"/>
        <end position="639"/>
    </location>
</feature>
<feature type="disulfide bond" evidence="9">
    <location>
        <begin position="647"/>
        <end position="658"/>
    </location>
</feature>
<feature type="disulfide bond" evidence="9">
    <location>
        <begin position="652"/>
        <end position="667"/>
    </location>
</feature>
<feature type="disulfide bond" evidence="9">
    <location>
        <begin position="669"/>
        <end position="679"/>
    </location>
</feature>
<feature type="disulfide bond" evidence="10">
    <location>
        <begin position="1018"/>
        <end position="1046"/>
    </location>
</feature>
<feature type="disulfide bond" evidence="9">
    <location>
        <begin position="1053"/>
        <end position="1064"/>
    </location>
</feature>
<feature type="disulfide bond" evidence="9">
    <location>
        <begin position="1058"/>
        <end position="1073"/>
    </location>
</feature>
<feature type="disulfide bond" evidence="9">
    <location>
        <begin position="1075"/>
        <end position="1085"/>
    </location>
</feature>
<feature type="splice variant" id="VSP_036463" description="In isoform 3a." evidence="16 17">
    <location>
        <begin position="1"/>
        <end position="373"/>
    </location>
</feature>
<feature type="splice variant" id="VSP_041699" description="In isoform 4a." evidence="15">
    <location>
        <begin position="237"/>
        <end position="242"/>
    </location>
</feature>
<feature type="splice variant" id="VSP_041700" description="In isoform 4a." evidence="15">
    <original>Q</original>
    <variation>QGRSK</variation>
    <location>
        <position position="252"/>
    </location>
</feature>
<feature type="splice variant" id="VSP_041701" description="In isoform 4a." evidence="15">
    <original>DCIRINCNSS</original>
    <variation>G</variation>
    <location>
        <begin position="750"/>
        <end position="759"/>
    </location>
</feature>
<feature type="splice variant" id="VSP_041702" description="In isoform 4a." evidence="15">
    <original>T</original>
    <variation>TGNTDNERFQMVKQKIPFKYNRPVEEWLQEK</variation>
    <location>
        <position position="1205"/>
    </location>
</feature>
<feature type="splice variant" id="VSP_036464" description="In isoform 3a." evidence="16 17">
    <location>
        <begin position="1334"/>
        <end position="1542"/>
    </location>
</feature>
<feature type="splice variant" id="VSP_041703" description="In isoform 4a." evidence="15">
    <original>TGGELVIPLLVEDPLATPPIATRAPSITLPPTFRPLLTI</original>
    <variation>GRSARSSNAARSLRAALTWTWRLTYTFTPIIFISCVVHS</variation>
    <location>
        <begin position="1335"/>
        <end position="1373"/>
    </location>
</feature>
<feature type="splice variant" id="VSP_041704" description="In isoform 4a." evidence="15">
    <location>
        <begin position="1374"/>
        <end position="1643"/>
    </location>
</feature>
<feature type="sequence conflict" description="In Ref. 3; BAA34463 and 6; AAI52458." evidence="18" ref="3 6">
    <original>E</original>
    <variation>K</variation>
    <location>
        <position position="1043"/>
    </location>
</feature>
<gene>
    <name type="primary">NRXN3</name>
    <name type="synonym">C14orf60</name>
    <name type="synonym">KIAA0743</name>
</gene>
<comment type="function">
    <text evidence="7">Neuronal cell surface protein that may be involved in cell recognition and cell adhesion. May mediate intracellular signaling (By similarity).</text>
</comment>
<comment type="subunit">
    <text evidence="2 4">The laminin G-like domain 2 binds to NXPH1 (By similarity). Specific isoforms bind to alpha-dystroglycan (By similarity). The cytoplasmic C-terminal region binds to CASK (By similarity). Specific isoforms bind neuroligins NLGN1, NLGN2 and NLGN3 (By similarity). Interacts with CLSTN3 (By similarity).</text>
</comment>
<comment type="subcellular location">
    <subcellularLocation>
        <location evidence="7">Presynaptic cell membrane</location>
        <topology evidence="8">Single-pass type I membrane protein</topology>
    </subcellularLocation>
</comment>
<comment type="alternative products">
    <event type="alternative promoter"/>
    <event type="alternative splicing"/>
    <isoform>
        <id>Q9Y4C0-1</id>
        <name>1a</name>
        <sequence type="displayed"/>
    </isoform>
    <isoform>
        <id>Q9Y4C0-3</id>
        <name>3a</name>
        <sequence type="described" ref="VSP_036463 VSP_036464"/>
    </isoform>
    <isoform>
        <id>Q9Y4C0-4</id>
        <name>4a</name>
        <sequence type="described" ref="VSP_041699 VSP_041700 VSP_041701 VSP_041702 VSP_041703 VSP_041704"/>
    </isoform>
    <isoform>
        <id>Q9HDB5-1</id>
        <name>1b</name>
        <sequence type="external"/>
    </isoform>
    <isoform>
        <id>Q9HDB5-2</id>
        <name>2b</name>
        <sequence type="external"/>
    </isoform>
    <isoform>
        <id>Q9HDB5-3</id>
        <name>3b</name>
        <sequence type="external"/>
    </isoform>
    <isoform>
        <id>Q9HDB5-4</id>
        <name>4b</name>
        <sequence type="external"/>
    </isoform>
    <text evidence="12">A number of isoforms, alpha-type and beta-type, are produced by alternative promoter usage. Beta-type isoforms differ from alpha-type isoforms in their N-terminus. Additional isoforms produced by alternative splicing seem to exist.</text>
</comment>
<comment type="tissue specificity">
    <text evidence="13 14">Expressed in the blood vessel walls (at protein level). Highly expressed in brain, lung, and pancreas; a lower level of expression is detectable in heart, placenta, liver, and kidney, whereas no expression can be observed in skeletal muscle. Isoform 4a is heart-specific.</text>
</comment>
<comment type="PTM">
    <text evidence="5">O-glycosylated; contains heparan sulfate. Heparan sulfate attachment is required for synapse development by mediating interactions with neuroligins.</text>
</comment>
<comment type="miscellaneous">
    <molecule>Isoform 3a</molecule>
    <text evidence="18">Produced by alternative splicing.</text>
</comment>
<comment type="miscellaneous">
    <molecule>Isoform 4a</molecule>
    <text evidence="18">Produced by alternative splicing.</text>
</comment>
<comment type="similarity">
    <text evidence="18">Belongs to the neurexin family.</text>
</comment>
<comment type="sequence caution" evidence="18">
    <conflict type="erroneous initiation">
        <sequence resource="EMBL-CDS" id="BAA34463"/>
    </conflict>
    <text>Extended N-terminus.</text>
</comment>
<proteinExistence type="evidence at protein level"/>
<dbReference type="EMBL" id="AJ316284">
    <property type="protein sequence ID" value="CAC87720.2"/>
    <property type="molecule type" value="mRNA"/>
</dbReference>
<dbReference type="EMBL" id="AF099810">
    <property type="protein sequence ID" value="AAC68909.1"/>
    <property type="molecule type" value="Genomic_DNA"/>
</dbReference>
<dbReference type="EMBL" id="AF123462">
    <property type="protein sequence ID" value="AAD13621.1"/>
    <property type="molecule type" value="Genomic_DNA"/>
</dbReference>
<dbReference type="EMBL" id="AB018286">
    <property type="protein sequence ID" value="BAA34463.2"/>
    <property type="status" value="ALT_INIT"/>
    <property type="molecule type" value="mRNA"/>
</dbReference>
<dbReference type="EMBL" id="AC008056">
    <property type="protein sequence ID" value="AAF09143.1"/>
    <property type="molecule type" value="Genomic_DNA"/>
</dbReference>
<dbReference type="EMBL" id="AC012099">
    <property type="protein sequence ID" value="AAF15058.1"/>
    <property type="molecule type" value="Genomic_DNA"/>
</dbReference>
<dbReference type="EMBL" id="AC009396">
    <property type="protein sequence ID" value="AAF21147.1"/>
    <property type="molecule type" value="Genomic_DNA"/>
</dbReference>
<dbReference type="EMBL" id="AC008045">
    <property type="protein sequence ID" value="AAF28465.1"/>
    <property type="molecule type" value="Genomic_DNA"/>
</dbReference>
<dbReference type="EMBL" id="AC011440">
    <property type="protein sequence ID" value="AAF61277.1"/>
    <property type="molecule type" value="Genomic_DNA"/>
</dbReference>
<dbReference type="EMBL" id="AC026888">
    <property type="protein sequence ID" value="AAF87841.1"/>
    <property type="molecule type" value="Genomic_DNA"/>
</dbReference>
<dbReference type="EMBL" id="CH471061">
    <property type="protein sequence ID" value="EAW81316.1"/>
    <property type="molecule type" value="Genomic_DNA"/>
</dbReference>
<dbReference type="EMBL" id="BC152457">
    <property type="protein sequence ID" value="AAI52458.1"/>
    <property type="molecule type" value="mRNA"/>
</dbReference>
<dbReference type="CCDS" id="CCDS9870.1">
    <molecule id="Q9Y4C0-3"/>
</dbReference>
<dbReference type="RefSeq" id="NP_004787.2">
    <molecule id="Q9Y4C0-3"/>
    <property type="nucleotide sequence ID" value="NM_004796.5"/>
</dbReference>
<dbReference type="SMR" id="Q9Y4C0"/>
<dbReference type="BioGRID" id="114770">
    <property type="interactions" value="26"/>
</dbReference>
<dbReference type="ELM" id="Q9Y4C0"/>
<dbReference type="FunCoup" id="Q9Y4C0">
    <property type="interactions" value="1379"/>
</dbReference>
<dbReference type="IntAct" id="Q9Y4C0">
    <property type="interactions" value="2"/>
</dbReference>
<dbReference type="STRING" id="9606.ENSP00000489551"/>
<dbReference type="GlyCosmos" id="Q9Y4C0">
    <property type="glycosylation" value="6 sites, No reported glycans"/>
</dbReference>
<dbReference type="GlyGen" id="Q9Y4C0">
    <property type="glycosylation" value="7 sites"/>
</dbReference>
<dbReference type="iPTMnet" id="Q9Y4C0"/>
<dbReference type="PhosphoSitePlus" id="Q9Y4C0"/>
<dbReference type="BioMuta" id="NRXN3"/>
<dbReference type="DMDM" id="224471902"/>
<dbReference type="jPOST" id="Q9Y4C0"/>
<dbReference type="MassIVE" id="Q9Y4C0"/>
<dbReference type="PeptideAtlas" id="Q9Y4C0"/>
<dbReference type="ProteomicsDB" id="86154">
    <molecule id="Q9Y4C0-1"/>
</dbReference>
<dbReference type="ProteomicsDB" id="86155">
    <molecule id="Q9Y4C0-3"/>
</dbReference>
<dbReference type="ProteomicsDB" id="86156">
    <molecule id="Q9Y4C0-4"/>
</dbReference>
<dbReference type="Antibodypedia" id="106">
    <property type="antibodies" value="235 antibodies from 31 providers"/>
</dbReference>
<dbReference type="DNASU" id="9369"/>
<dbReference type="Ensembl" id="ENST00000554719.5">
    <molecule id="Q9Y4C0-3"/>
    <property type="protein sequence ID" value="ENSP00000451648.1"/>
    <property type="gene ID" value="ENSG00000021645.20"/>
</dbReference>
<dbReference type="Ensembl" id="ENST00000554738.5">
    <molecule id="Q9Y4C0-4"/>
    <property type="protein sequence ID" value="ENSP00000450683.1"/>
    <property type="gene ID" value="ENSG00000021645.20"/>
</dbReference>
<dbReference type="GeneID" id="9369"/>
<dbReference type="UCSC" id="uc001xun.5">
    <molecule id="Q9Y4C0-1"/>
    <property type="organism name" value="human"/>
</dbReference>
<dbReference type="AGR" id="HGNC:8010"/>
<dbReference type="CTD" id="9369"/>
<dbReference type="DisGeNET" id="9369"/>
<dbReference type="GeneCards" id="NRXN3"/>
<dbReference type="HGNC" id="HGNC:8010">
    <property type="gene designation" value="NRXN3"/>
</dbReference>
<dbReference type="HPA" id="ENSG00000021645">
    <property type="expression patterns" value="Tissue enhanced (brain, retina)"/>
</dbReference>
<dbReference type="MalaCards" id="NRXN3"/>
<dbReference type="MIM" id="600567">
    <property type="type" value="gene"/>
</dbReference>
<dbReference type="neXtProt" id="NX_Q9Y4C0"/>
<dbReference type="OpenTargets" id="ENSG00000021645"/>
<dbReference type="PharmGKB" id="PA31788"/>
<dbReference type="VEuPathDB" id="HostDB:ENSG00000021645"/>
<dbReference type="eggNOG" id="KOG3514">
    <property type="taxonomic scope" value="Eukaryota"/>
</dbReference>
<dbReference type="GeneTree" id="ENSGT00940000154618"/>
<dbReference type="HOGENOM" id="CLU_001710_0_1_1"/>
<dbReference type="InParanoid" id="Q9Y4C0"/>
<dbReference type="OrthoDB" id="5989513at2759"/>
<dbReference type="PAN-GO" id="Q9Y4C0">
    <property type="GO annotations" value="0 GO annotations based on evolutionary models"/>
</dbReference>
<dbReference type="PhylomeDB" id="Q9Y4C0"/>
<dbReference type="TreeFam" id="TF321302"/>
<dbReference type="PathwayCommons" id="Q9Y4C0"/>
<dbReference type="Reactome" id="R-HSA-6794361">
    <property type="pathway name" value="Neurexins and neuroligins"/>
</dbReference>
<dbReference type="SignaLink" id="Q9Y4C0"/>
<dbReference type="SIGNOR" id="Q9Y4C0"/>
<dbReference type="BioGRID-ORCS" id="9369">
    <property type="hits" value="13 hits in 1146 CRISPR screens"/>
</dbReference>
<dbReference type="CD-CODE" id="FB4E32DD">
    <property type="entry name" value="Presynaptic clusters and postsynaptic densities"/>
</dbReference>
<dbReference type="ChiTaRS" id="NRXN3">
    <property type="organism name" value="human"/>
</dbReference>
<dbReference type="GenomeRNAi" id="9369"/>
<dbReference type="Pharos" id="Q9Y4C0">
    <property type="development level" value="Tbio"/>
</dbReference>
<dbReference type="Proteomes" id="UP000005640">
    <property type="component" value="Chromosome 14"/>
</dbReference>
<dbReference type="RNAct" id="Q9Y4C0">
    <property type="molecule type" value="protein"/>
</dbReference>
<dbReference type="Bgee" id="ENSG00000021645">
    <property type="expression patterns" value="Expressed in cerebellar vermis and 164 other cell types or tissues"/>
</dbReference>
<dbReference type="ExpressionAtlas" id="Q9Y4C0">
    <property type="expression patterns" value="baseline and differential"/>
</dbReference>
<dbReference type="GO" id="GO:0042995">
    <property type="term" value="C:cell projection"/>
    <property type="evidence" value="ECO:0007669"/>
    <property type="project" value="UniProtKB-KW"/>
</dbReference>
<dbReference type="GO" id="GO:0005886">
    <property type="term" value="C:plasma membrane"/>
    <property type="evidence" value="ECO:0000304"/>
    <property type="project" value="Reactome"/>
</dbReference>
<dbReference type="GO" id="GO:0042734">
    <property type="term" value="C:presynaptic membrane"/>
    <property type="evidence" value="ECO:0007669"/>
    <property type="project" value="UniProtKB-SubCell"/>
</dbReference>
<dbReference type="GO" id="GO:0050839">
    <property type="term" value="F:cell adhesion molecule binding"/>
    <property type="evidence" value="ECO:0000304"/>
    <property type="project" value="BHF-UCL"/>
</dbReference>
<dbReference type="GO" id="GO:0046872">
    <property type="term" value="F:metal ion binding"/>
    <property type="evidence" value="ECO:0007669"/>
    <property type="project" value="UniProtKB-KW"/>
</dbReference>
<dbReference type="GO" id="GO:0097109">
    <property type="term" value="F:neuroligin family protein binding"/>
    <property type="evidence" value="ECO:0000304"/>
    <property type="project" value="BHF-UCL"/>
</dbReference>
<dbReference type="GO" id="GO:0038023">
    <property type="term" value="F:signaling receptor activity"/>
    <property type="evidence" value="ECO:0000304"/>
    <property type="project" value="ProtInc"/>
</dbReference>
<dbReference type="GO" id="GO:0030534">
    <property type="term" value="P:adult behavior"/>
    <property type="evidence" value="ECO:0000316"/>
    <property type="project" value="BHF-UCL"/>
</dbReference>
<dbReference type="GO" id="GO:0007411">
    <property type="term" value="P:axon guidance"/>
    <property type="evidence" value="ECO:0000304"/>
    <property type="project" value="ProtInc"/>
</dbReference>
<dbReference type="GO" id="GO:0007612">
    <property type="term" value="P:learning"/>
    <property type="evidence" value="ECO:0000316"/>
    <property type="project" value="BHF-UCL"/>
</dbReference>
<dbReference type="GO" id="GO:0007158">
    <property type="term" value="P:neuron cell-cell adhesion"/>
    <property type="evidence" value="ECO:0000304"/>
    <property type="project" value="BHF-UCL"/>
</dbReference>
<dbReference type="GO" id="GO:0035176">
    <property type="term" value="P:social behavior"/>
    <property type="evidence" value="ECO:0000316"/>
    <property type="project" value="BHF-UCL"/>
</dbReference>
<dbReference type="GO" id="GO:0071625">
    <property type="term" value="P:vocalization behavior"/>
    <property type="evidence" value="ECO:0000316"/>
    <property type="project" value="BHF-UCL"/>
</dbReference>
<dbReference type="CDD" id="cd00054">
    <property type="entry name" value="EGF_CA"/>
    <property type="match status" value="2"/>
</dbReference>
<dbReference type="CDD" id="cd00110">
    <property type="entry name" value="LamG"/>
    <property type="match status" value="6"/>
</dbReference>
<dbReference type="FunFam" id="2.60.120.200:FF:000080">
    <property type="entry name" value="neurexin 3 isoform X1"/>
    <property type="match status" value="1"/>
</dbReference>
<dbReference type="FunFam" id="2.10.25.10:FF:000015">
    <property type="entry name" value="neurexin-1 isoform X1"/>
    <property type="match status" value="1"/>
</dbReference>
<dbReference type="FunFam" id="2.10.25.10:FF:000029">
    <property type="entry name" value="neurexin-1 isoform X1"/>
    <property type="match status" value="1"/>
</dbReference>
<dbReference type="FunFam" id="2.60.120.200:FF:000001">
    <property type="entry name" value="neurexin-1 isoform X1"/>
    <property type="match status" value="1"/>
</dbReference>
<dbReference type="FunFam" id="2.60.120.200:FF:000003">
    <property type="entry name" value="neurexin-1 isoform X1"/>
    <property type="match status" value="1"/>
</dbReference>
<dbReference type="FunFam" id="2.60.120.200:FF:000004">
    <property type="entry name" value="neurexin-1 isoform X1"/>
    <property type="match status" value="1"/>
</dbReference>
<dbReference type="FunFam" id="2.60.120.200:FF:000005">
    <property type="entry name" value="neurexin-1 isoform X1"/>
    <property type="match status" value="1"/>
</dbReference>
<dbReference type="FunFam" id="2.60.120.200:FF:000007">
    <property type="entry name" value="neurexin-1 isoform X1"/>
    <property type="match status" value="1"/>
</dbReference>
<dbReference type="Gene3D" id="2.60.120.200">
    <property type="match status" value="6"/>
</dbReference>
<dbReference type="Gene3D" id="2.10.25.10">
    <property type="entry name" value="Laminin"/>
    <property type="match status" value="3"/>
</dbReference>
<dbReference type="InterPro" id="IPR013320">
    <property type="entry name" value="ConA-like_dom_sf"/>
</dbReference>
<dbReference type="InterPro" id="IPR000742">
    <property type="entry name" value="EGF-like_dom"/>
</dbReference>
<dbReference type="InterPro" id="IPR000152">
    <property type="entry name" value="EGF-type_Asp/Asn_hydroxyl_site"/>
</dbReference>
<dbReference type="InterPro" id="IPR001791">
    <property type="entry name" value="Laminin_G"/>
</dbReference>
<dbReference type="InterPro" id="IPR003585">
    <property type="entry name" value="Neurexin-like"/>
</dbReference>
<dbReference type="InterPro" id="IPR050372">
    <property type="entry name" value="Neurexin-related_CASP"/>
</dbReference>
<dbReference type="PANTHER" id="PTHR15036">
    <property type="entry name" value="PIKACHURIN-LIKE PROTEIN"/>
    <property type="match status" value="1"/>
</dbReference>
<dbReference type="PANTHER" id="PTHR15036:SF85">
    <property type="entry name" value="SP2353, ISOFORM A"/>
    <property type="match status" value="1"/>
</dbReference>
<dbReference type="Pfam" id="PF02210">
    <property type="entry name" value="Laminin_G_2"/>
    <property type="match status" value="6"/>
</dbReference>
<dbReference type="SMART" id="SM00294">
    <property type="entry name" value="4.1m"/>
    <property type="match status" value="1"/>
</dbReference>
<dbReference type="SMART" id="SM00181">
    <property type="entry name" value="EGF"/>
    <property type="match status" value="3"/>
</dbReference>
<dbReference type="SMART" id="SM00282">
    <property type="entry name" value="LamG"/>
    <property type="match status" value="6"/>
</dbReference>
<dbReference type="SUPFAM" id="SSF49899">
    <property type="entry name" value="Concanavalin A-like lectins/glucanases"/>
    <property type="match status" value="6"/>
</dbReference>
<dbReference type="PROSITE" id="PS00010">
    <property type="entry name" value="ASX_HYDROXYL"/>
    <property type="match status" value="1"/>
</dbReference>
<dbReference type="PROSITE" id="PS50026">
    <property type="entry name" value="EGF_3"/>
    <property type="match status" value="3"/>
</dbReference>
<dbReference type="PROSITE" id="PS50025">
    <property type="entry name" value="LAM_G_DOMAIN"/>
    <property type="match status" value="6"/>
</dbReference>
<name>NRX3A_HUMAN</name>
<sequence>MSSTLHSVFFTLKVSILLGSLLGLCLGLEFMGLPNQWARYLRWDASTRSDLSFQFKTNVSTGLLLYLDDGGVCDFLCLSLVDGRVQLRFSMDCAETAVLSNKQVNDSSWHFLMVSRDRLRTVLMLDGEGQSGELQPQRPYMDVVSDLFLGGVPTDIRPSALTLDGVQAMPGFKGLILDLKYGNSEPRLLGSRGVQMDAEGPCGERPCENGGICFLLDGHPTCDCSTTGYGGKLCSEDVSQDPGLSHLMMSEQAREENVATFRGSEYLCYDLSQNPIQSSSDEITLSFKTWQRNGLILHTGKSADYVNLALKDGAVSLVINLGSGAFEAIVEPVNGKFNDNAWHDVKVTRNLRQVTISVDGILTTTGYTQEDYTMLGSDDFFYVGGSPSTADLPGSPVSNNFMGCLKEVVYKNNDIRLELSRLARIADTKMKIYGEVVFKCENVATLDPINFETPEAYISLPKWNTKRMGSISFDFRTTEPNGLILFTHGKPQERKDARSQKNTKVDFFAVELLDGNLYLLLDMGSGTIKVKATQKKANDGEWYHVDIQRDGRSGTISVNSRRTPFTASGESEILDLEGDMYLGGLPENRAGLILPTELWTAMLNYGYVGCIRDLFIDGRSKNIRQLAEMQNAAGVKSSCSRMSAKQCDSYPCKNNAVCKDGWNRFICDCTGTGYWGRTCEREASILSYDGSMYMKIIMPMVMHTEAEDVSFRFMSQRAYGLLVATTSRDSADTLRLELDGGRVKLMVNLDCIRINCNSSKGPETLYAGQKLNDNEWHTVRVVRRGKSLKLTVDDDVAEGTMVGDHTRLEFHNIETGIMTEKRYISVVPSSFIGHLQSLMFNGLLYIDLCKNGDIDYCELKARFGLRNIIADPVTFKTKSSYLSLATLQAYTSMHLFFQFKTTSPDGFILFNSGDGNDFIAVELVKGYIHYVFDLGNGPNVIKGNSDRPLNDNQWHNVVITRDNSNTHSLKVDTKVVTQVINGAKNLDLKGDLYMAGLAQGMYSNLPKLVASRDGFQGCLASVDLNGRLPDLINDALHRSGQIERGCEGPSTTCQEDSCANQGVCMQQWEGFTCDCSMTSYSGNQCNDPGATYIFGKSGGLILYTWPANDRPSTRSDRLAVGFSTTVKDGILVRIDSAPGLGDFLQLHIEQGKIGVVFNIGTVDISIKEERTPVNDGKYHVVRFTRNGGNATLQVDNWPVNEHYPTGRQLTIFNTQAQIAIGGKDKGRLFQGQLSGLYYDGLKVLNMAAENNPNIKINGSVRLVGEVPSILGTTQTTSMPPEMSTTVMETTTTMATTTTRKNRSTASIQPTSDDLVSSAECSSDDEDFVECEPSTTGGELVIPLLVEDPLATPPIATRAPSITLPPTFRPLLTIIETTKDSLSMTSEAGLPCLSDQGSDGCDDDGLVISGYGSGETFDSNLPPTDDEDFYTTFSLVTDKSLSTSIFEGGYKAHAPKWESKDFRPNKVSETSRTTTTSLSPELIRFTASSSSGMVPKLPAGKMNNRDLKPQPDIVLLPLPTAYELDSTKLKSPLITSPMFRNVPTANPTEPGIRRVPGASEVIRESSSTTGMVVGIVAAAALCILILLYAMYKYRNRDEGSYQVDETRNYISNSAQSNGTLMKEKQQSSKSGHKKQKNKDREYYV</sequence>
<protein>
    <recommendedName>
        <fullName>Neurexin-3</fullName>
    </recommendedName>
    <alternativeName>
        <fullName>Neurexin III-alpha</fullName>
    </alternativeName>
    <alternativeName>
        <fullName>Neurexin-3-alpha</fullName>
    </alternativeName>
</protein>
<reference key="1">
    <citation type="journal article" date="2002" name="Biochem. Biophys. Res. Commun.">
        <title>Identification and characterization of heart-specific splicing of human neurexin 3 mRNA (NRXN3).</title>
        <authorList>
            <person name="Occhi G."/>
            <person name="Rampazzo A."/>
            <person name="Beffagna G."/>
            <person name="Antonio Danieli G."/>
        </authorList>
    </citation>
    <scope>NUCLEOTIDE SEQUENCE [MRNA] (ISOFORM 4A)</scope>
    <scope>TISSUE SPECIFICITY</scope>
    <source>
        <tissue>Heart</tissue>
    </source>
</reference>
<reference key="2">
    <citation type="journal article" date="2002" name="Genomics">
        <title>Analysis of the human neurexin genes: alternative splicing and the generation of protein diversity.</title>
        <authorList>
            <person name="Rowen L."/>
            <person name="Young J."/>
            <person name="Birditt B."/>
            <person name="Kaur A."/>
            <person name="Madan A."/>
            <person name="Philipps D.L."/>
            <person name="Qin S."/>
            <person name="Minx P."/>
            <person name="Wilson R.K."/>
            <person name="Hood L."/>
            <person name="Graveley B.R."/>
        </authorList>
    </citation>
    <scope>NUCLEOTIDE SEQUENCE [GENOMIC DNA]</scope>
    <scope>ALTERNATIVE SPLICING</scope>
</reference>
<reference key="3">
    <citation type="journal article" date="1998" name="DNA Res.">
        <title>Prediction of the coding sequences of unidentified human genes. XI. The complete sequences of 100 new cDNA clones from brain which code for large proteins in vitro.</title>
        <authorList>
            <person name="Nagase T."/>
            <person name="Ishikawa K."/>
            <person name="Suyama M."/>
            <person name="Kikuno R."/>
            <person name="Miyajima N."/>
            <person name="Tanaka A."/>
            <person name="Kotani H."/>
            <person name="Nomura N."/>
            <person name="Ohara O."/>
        </authorList>
    </citation>
    <scope>NUCLEOTIDE SEQUENCE [LARGE SCALE MRNA] (ISOFORM 3A)</scope>
    <source>
        <tissue>Brain</tissue>
    </source>
</reference>
<reference key="4">
    <citation type="journal article" date="2003" name="Nature">
        <title>The DNA sequence and analysis of human chromosome 14.</title>
        <authorList>
            <person name="Heilig R."/>
            <person name="Eckenberg R."/>
            <person name="Petit J.-L."/>
            <person name="Fonknechten N."/>
            <person name="Da Silva C."/>
            <person name="Cattolico L."/>
            <person name="Levy M."/>
            <person name="Barbe V."/>
            <person name="De Berardinis V."/>
            <person name="Ureta-Vidal A."/>
            <person name="Pelletier E."/>
            <person name="Vico V."/>
            <person name="Anthouard V."/>
            <person name="Rowen L."/>
            <person name="Madan A."/>
            <person name="Qin S."/>
            <person name="Sun H."/>
            <person name="Du H."/>
            <person name="Pepin K."/>
            <person name="Artiguenave F."/>
            <person name="Robert C."/>
            <person name="Cruaud C."/>
            <person name="Bruels T."/>
            <person name="Jaillon O."/>
            <person name="Friedlander L."/>
            <person name="Samson G."/>
            <person name="Brottier P."/>
            <person name="Cure S."/>
            <person name="Segurens B."/>
            <person name="Aniere F."/>
            <person name="Samain S."/>
            <person name="Crespeau H."/>
            <person name="Abbasi N."/>
            <person name="Aiach N."/>
            <person name="Boscus D."/>
            <person name="Dickhoff R."/>
            <person name="Dors M."/>
            <person name="Dubois I."/>
            <person name="Friedman C."/>
            <person name="Gouyvenoux M."/>
            <person name="James R."/>
            <person name="Madan A."/>
            <person name="Mairey-Estrada B."/>
            <person name="Mangenot S."/>
            <person name="Martins N."/>
            <person name="Menard M."/>
            <person name="Oztas S."/>
            <person name="Ratcliffe A."/>
            <person name="Shaffer T."/>
            <person name="Trask B."/>
            <person name="Vacherie B."/>
            <person name="Bellemere C."/>
            <person name="Belser C."/>
            <person name="Besnard-Gonnet M."/>
            <person name="Bartol-Mavel D."/>
            <person name="Boutard M."/>
            <person name="Briez-Silla S."/>
            <person name="Combette S."/>
            <person name="Dufosse-Laurent V."/>
            <person name="Ferron C."/>
            <person name="Lechaplais C."/>
            <person name="Louesse C."/>
            <person name="Muselet D."/>
            <person name="Magdelenat G."/>
            <person name="Pateau E."/>
            <person name="Petit E."/>
            <person name="Sirvain-Trukniewicz P."/>
            <person name="Trybou A."/>
            <person name="Vega-Czarny N."/>
            <person name="Bataille E."/>
            <person name="Bluet E."/>
            <person name="Bordelais I."/>
            <person name="Dubois M."/>
            <person name="Dumont C."/>
            <person name="Guerin T."/>
            <person name="Haffray S."/>
            <person name="Hammadi R."/>
            <person name="Muanga J."/>
            <person name="Pellouin V."/>
            <person name="Robert D."/>
            <person name="Wunderle E."/>
            <person name="Gauguet G."/>
            <person name="Roy A."/>
            <person name="Sainte-Marthe L."/>
            <person name="Verdier J."/>
            <person name="Verdier-Discala C."/>
            <person name="Hillier L.W."/>
            <person name="Fulton L."/>
            <person name="McPherson J."/>
            <person name="Matsuda F."/>
            <person name="Wilson R."/>
            <person name="Scarpelli C."/>
            <person name="Gyapay G."/>
            <person name="Wincker P."/>
            <person name="Saurin W."/>
            <person name="Quetier F."/>
            <person name="Waterston R."/>
            <person name="Hood L."/>
            <person name="Weissenbach J."/>
        </authorList>
    </citation>
    <scope>NUCLEOTIDE SEQUENCE [LARGE SCALE GENOMIC DNA]</scope>
</reference>
<reference key="5">
    <citation type="submission" date="2005-07" db="EMBL/GenBank/DDBJ databases">
        <authorList>
            <person name="Mural R.J."/>
            <person name="Istrail S."/>
            <person name="Sutton G.G."/>
            <person name="Florea L."/>
            <person name="Halpern A.L."/>
            <person name="Mobarry C.M."/>
            <person name="Lippert R."/>
            <person name="Walenz B."/>
            <person name="Shatkay H."/>
            <person name="Dew I."/>
            <person name="Miller J.R."/>
            <person name="Flanigan M.J."/>
            <person name="Edwards N.J."/>
            <person name="Bolanos R."/>
            <person name="Fasulo D."/>
            <person name="Halldorsson B.V."/>
            <person name="Hannenhalli S."/>
            <person name="Turner R."/>
            <person name="Yooseph S."/>
            <person name="Lu F."/>
            <person name="Nusskern D.R."/>
            <person name="Shue B.C."/>
            <person name="Zheng X.H."/>
            <person name="Zhong F."/>
            <person name="Delcher A.L."/>
            <person name="Huson D.H."/>
            <person name="Kravitz S.A."/>
            <person name="Mouchard L."/>
            <person name="Reinert K."/>
            <person name="Remington K.A."/>
            <person name="Clark A.G."/>
            <person name="Waterman M.S."/>
            <person name="Eichler E.E."/>
            <person name="Adams M.D."/>
            <person name="Hunkapiller M.W."/>
            <person name="Myers E.W."/>
            <person name="Venter J.C."/>
        </authorList>
    </citation>
    <scope>NUCLEOTIDE SEQUENCE [LARGE SCALE GENOMIC DNA]</scope>
</reference>
<reference key="6">
    <citation type="journal article" date="2004" name="Genome Res.">
        <title>The status, quality, and expansion of the NIH full-length cDNA project: the Mammalian Gene Collection (MGC).</title>
        <authorList>
            <consortium name="The MGC Project Team"/>
        </authorList>
    </citation>
    <scope>NUCLEOTIDE SEQUENCE [LARGE SCALE MRNA] (ISOFORM 3A)</scope>
</reference>
<reference key="7">
    <citation type="journal article" date="2009" name="Proc. Natl. Acad. Sci. U.S.A.">
        <title>The synaptic proteins neurexins and neuroligins are widely expressed in the vascular system and contribute to its functions.</title>
        <authorList>
            <person name="Bottos A."/>
            <person name="Destro E."/>
            <person name="Rissone A."/>
            <person name="Graziano S."/>
            <person name="Cordara G."/>
            <person name="Assenzio B."/>
            <person name="Cera M.R."/>
            <person name="Mascia L."/>
            <person name="Bussolino F."/>
            <person name="Arese M."/>
        </authorList>
    </citation>
    <scope>TISSUE SPECIFICITY</scope>
</reference>
<keyword id="KW-0877">Alternative promoter usage</keyword>
<keyword id="KW-0025">Alternative splicing</keyword>
<keyword id="KW-0106">Calcium</keyword>
<keyword id="KW-0130">Cell adhesion</keyword>
<keyword id="KW-1003">Cell membrane</keyword>
<keyword id="KW-0966">Cell projection</keyword>
<keyword id="KW-1015">Disulfide bond</keyword>
<keyword id="KW-0245">EGF-like domain</keyword>
<keyword id="KW-0325">Glycoprotein</keyword>
<keyword id="KW-0357">Heparan sulfate</keyword>
<keyword id="KW-0472">Membrane</keyword>
<keyword id="KW-0479">Metal-binding</keyword>
<keyword id="KW-0654">Proteoglycan</keyword>
<keyword id="KW-1267">Proteomics identification</keyword>
<keyword id="KW-1185">Reference proteome</keyword>
<keyword id="KW-0677">Repeat</keyword>
<keyword id="KW-0732">Signal</keyword>
<keyword id="KW-0770">Synapse</keyword>
<keyword id="KW-0812">Transmembrane</keyword>
<keyword id="KW-1133">Transmembrane helix</keyword>
<organism>
    <name type="scientific">Homo sapiens</name>
    <name type="common">Human</name>
    <dbReference type="NCBI Taxonomy" id="9606"/>
    <lineage>
        <taxon>Eukaryota</taxon>
        <taxon>Metazoa</taxon>
        <taxon>Chordata</taxon>
        <taxon>Craniata</taxon>
        <taxon>Vertebrata</taxon>
        <taxon>Euteleostomi</taxon>
        <taxon>Mammalia</taxon>
        <taxon>Eutheria</taxon>
        <taxon>Euarchontoglires</taxon>
        <taxon>Primates</taxon>
        <taxon>Haplorrhini</taxon>
        <taxon>Catarrhini</taxon>
        <taxon>Hominidae</taxon>
        <taxon>Homo</taxon>
    </lineage>
</organism>